<comment type="function">
    <text evidence="1">Required for the assembly of the V0 complex of the vacuolar ATPase (V-ATPase) in the endoplasmic reticulum.</text>
</comment>
<comment type="subcellular location">
    <subcellularLocation>
        <location evidence="1">Endoplasmic reticulum membrane</location>
        <topology evidence="1">Multi-pass membrane protein</topology>
    </subcellularLocation>
    <subcellularLocation>
        <location evidence="1">Endoplasmic reticulum-Golgi intermediate compartment membrane</location>
        <topology evidence="1">Multi-pass membrane protein</topology>
    </subcellularLocation>
    <subcellularLocation>
        <location evidence="1">Cytoplasmic vesicle</location>
        <location evidence="1">COPII-coated vesicle membrane</location>
        <topology evidence="1">Multi-pass membrane protein</topology>
    </subcellularLocation>
</comment>
<comment type="similarity">
    <text evidence="1">Belongs to the VMA21 family.</text>
</comment>
<organism>
    <name type="scientific">Drosophila yakuba</name>
    <name type="common">Fruit fly</name>
    <dbReference type="NCBI Taxonomy" id="7245"/>
    <lineage>
        <taxon>Eukaryota</taxon>
        <taxon>Metazoa</taxon>
        <taxon>Ecdysozoa</taxon>
        <taxon>Arthropoda</taxon>
        <taxon>Hexapoda</taxon>
        <taxon>Insecta</taxon>
        <taxon>Pterygota</taxon>
        <taxon>Neoptera</taxon>
        <taxon>Endopterygota</taxon>
        <taxon>Diptera</taxon>
        <taxon>Brachycera</taxon>
        <taxon>Muscomorpha</taxon>
        <taxon>Ephydroidea</taxon>
        <taxon>Drosophilidae</taxon>
        <taxon>Drosophila</taxon>
        <taxon>Sophophora</taxon>
    </lineage>
</organism>
<feature type="chain" id="PRO_0000377576" description="Vacuolar ATPase assembly integral membrane protein VMA21 homolog">
    <location>
        <begin position="1"/>
        <end position="105"/>
    </location>
</feature>
<feature type="topological domain" description="Cytoplasmic" evidence="1">
    <location>
        <begin position="1"/>
        <end position="36"/>
    </location>
</feature>
<feature type="transmembrane region" description="Helical" evidence="1">
    <location>
        <begin position="37"/>
        <end position="57"/>
    </location>
</feature>
<feature type="topological domain" description="Lumenal" evidence="1">
    <location>
        <begin position="58"/>
        <end position="68"/>
    </location>
</feature>
<feature type="transmembrane region" description="Helical" evidence="1">
    <location>
        <begin position="69"/>
        <end position="89"/>
    </location>
</feature>
<feature type="topological domain" description="Cytoplasmic" evidence="1">
    <location>
        <begin position="90"/>
        <end position="105"/>
    </location>
</feature>
<feature type="region of interest" description="Disordered" evidence="2">
    <location>
        <begin position="1"/>
        <end position="26"/>
    </location>
</feature>
<gene>
    <name type="ORF">GE19686</name>
</gene>
<protein>
    <recommendedName>
        <fullName evidence="1">Vacuolar ATPase assembly integral membrane protein VMA21 homolog</fullName>
    </recommendedName>
</protein>
<accession>B4PET6</accession>
<sequence length="105" mass="11355">MSTKNKKAAGGNGGAPKQTRQQSHDSQDYSSFKTVLFYCMLIVFLPVLTFFVLKGFVLDQFLDISEVKVNIASAVGAVVALHVALGLYIYRAYFGAPGSKASKTD</sequence>
<keyword id="KW-0968">Cytoplasmic vesicle</keyword>
<keyword id="KW-0256">Endoplasmic reticulum</keyword>
<keyword id="KW-0472">Membrane</keyword>
<keyword id="KW-0812">Transmembrane</keyword>
<keyword id="KW-1133">Transmembrane helix</keyword>
<name>VMA21_DROYA</name>
<proteinExistence type="inferred from homology"/>
<dbReference type="EMBL" id="CM000159">
    <property type="protein sequence ID" value="EDW95160.1"/>
    <property type="molecule type" value="Genomic_DNA"/>
</dbReference>
<dbReference type="RefSeq" id="XP_015050829.1">
    <property type="nucleotide sequence ID" value="XM_015195343.1"/>
</dbReference>
<dbReference type="SMR" id="B4PET6"/>
<dbReference type="EnsemblMetazoa" id="FBtr0266204">
    <property type="protein sequence ID" value="FBpp0264696"/>
    <property type="gene ID" value="FBgn0237021"/>
</dbReference>
<dbReference type="EnsemblMetazoa" id="FBtr0397529">
    <property type="protein sequence ID" value="FBpp0356659"/>
    <property type="gene ID" value="FBgn0276205"/>
</dbReference>
<dbReference type="EnsemblMetazoa" id="XM_002095412.4">
    <property type="protein sequence ID" value="XP_002095448.1"/>
    <property type="gene ID" value="LOC6534773"/>
</dbReference>
<dbReference type="GeneID" id="6534773"/>
<dbReference type="KEGG" id="dya:Dyak_GE19686"/>
<dbReference type="eggNOG" id="KOG4783">
    <property type="taxonomic scope" value="Eukaryota"/>
</dbReference>
<dbReference type="HOGENOM" id="CLU_143588_2_0_1"/>
<dbReference type="OMA" id="PYFRGNE"/>
<dbReference type="OrthoDB" id="160405at2759"/>
<dbReference type="PhylomeDB" id="B4PET6"/>
<dbReference type="Proteomes" id="UP000002282">
    <property type="component" value="Chromosome 3L"/>
</dbReference>
<dbReference type="GO" id="GO:0005789">
    <property type="term" value="C:endoplasmic reticulum membrane"/>
    <property type="evidence" value="ECO:0007669"/>
    <property type="project" value="UniProtKB-SubCell"/>
</dbReference>
<dbReference type="GO" id="GO:0033116">
    <property type="term" value="C:endoplasmic reticulum-Golgi intermediate compartment membrane"/>
    <property type="evidence" value="ECO:0007669"/>
    <property type="project" value="UniProtKB-SubCell"/>
</dbReference>
<dbReference type="GO" id="GO:0012507">
    <property type="term" value="C:ER to Golgi transport vesicle membrane"/>
    <property type="evidence" value="ECO:0007669"/>
    <property type="project" value="UniProtKB-SubCell"/>
</dbReference>
<dbReference type="GO" id="GO:0070072">
    <property type="term" value="P:vacuolar proton-transporting V-type ATPase complex assembly"/>
    <property type="evidence" value="ECO:0007669"/>
    <property type="project" value="UniProtKB-UniRule"/>
</dbReference>
<dbReference type="HAMAP" id="MF_03058">
    <property type="entry name" value="VMA21"/>
    <property type="match status" value="1"/>
</dbReference>
<dbReference type="InterPro" id="IPR019013">
    <property type="entry name" value="Vma21"/>
</dbReference>
<dbReference type="PANTHER" id="PTHR31792">
    <property type="entry name" value="VACUOLAR ATPASE ASSEMBLY INTEGRAL MEMBRANE PROTEIN VMA21"/>
    <property type="match status" value="1"/>
</dbReference>
<dbReference type="PANTHER" id="PTHR31792:SF6">
    <property type="entry name" value="VACUOLAR ATPASE ASSEMBLY INTEGRAL MEMBRANE PROTEIN VMA21 HOMOLOG"/>
    <property type="match status" value="1"/>
</dbReference>
<dbReference type="Pfam" id="PF09446">
    <property type="entry name" value="VMA21"/>
    <property type="match status" value="1"/>
</dbReference>
<reference key="1">
    <citation type="journal article" date="2007" name="Nature">
        <title>Evolution of genes and genomes on the Drosophila phylogeny.</title>
        <authorList>
            <consortium name="Drosophila 12 genomes consortium"/>
        </authorList>
    </citation>
    <scope>NUCLEOTIDE SEQUENCE [LARGE SCALE GENOMIC DNA]</scope>
    <source>
        <strain>Tai18E2 / Tucson 14021-0261.01</strain>
    </source>
</reference>
<evidence type="ECO:0000255" key="1">
    <source>
        <dbReference type="HAMAP-Rule" id="MF_03058"/>
    </source>
</evidence>
<evidence type="ECO:0000256" key="2">
    <source>
        <dbReference type="SAM" id="MobiDB-lite"/>
    </source>
</evidence>